<sequence>MTQRTVWQDFQNGQQYMATWPMRKELAAIFPEQRYIKATKFATRVMPAVAVMSVLSQMAFNNYGALPQAMTVALFALTMPLQGLWWLGKRSRTTLPPSLAIWYREIYEKITSEGHAMQPLKKQPRYLELAEVLNRAFKQLDKTSLERWF</sequence>
<gene>
    <name type="ordered locus">PBPRA2797</name>
</gene>
<reference key="1">
    <citation type="journal article" date="2005" name="Science">
        <title>Life at depth: Photobacterium profundum genome sequence and expression analysis.</title>
        <authorList>
            <person name="Vezzi A."/>
            <person name="Campanaro S."/>
            <person name="D'Angelo M."/>
            <person name="Simonato F."/>
            <person name="Vitulo N."/>
            <person name="Lauro F.M."/>
            <person name="Cestaro A."/>
            <person name="Malacrida G."/>
            <person name="Simionati B."/>
            <person name="Cannata N."/>
            <person name="Romualdi C."/>
            <person name="Bartlett D.H."/>
            <person name="Valle G."/>
        </authorList>
    </citation>
    <scope>NUCLEOTIDE SEQUENCE [LARGE SCALE GENOMIC DNA]</scope>
    <source>
        <strain>ATCC BAA-1253 / SS9</strain>
    </source>
</reference>
<protein>
    <recommendedName>
        <fullName evidence="1">UPF0208 membrane protein PBPRA2797</fullName>
    </recommendedName>
</protein>
<comment type="subcellular location">
    <subcellularLocation>
        <location evidence="1">Cell inner membrane</location>
        <topology evidence="1">Multi-pass membrane protein</topology>
    </subcellularLocation>
</comment>
<comment type="similarity">
    <text evidence="1">Belongs to the UPF0208 family.</text>
</comment>
<comment type="sequence caution" evidence="2">
    <conflict type="erroneous initiation">
        <sequence resource="EMBL-CDS" id="CAG21169"/>
    </conflict>
</comment>
<evidence type="ECO:0000255" key="1">
    <source>
        <dbReference type="HAMAP-Rule" id="MF_01101"/>
    </source>
</evidence>
<evidence type="ECO:0000305" key="2"/>
<dbReference type="EMBL" id="CR378672">
    <property type="protein sequence ID" value="CAG21169.1"/>
    <property type="status" value="ALT_INIT"/>
    <property type="molecule type" value="Genomic_DNA"/>
</dbReference>
<dbReference type="SMR" id="Q6LNF7"/>
<dbReference type="STRING" id="298386.PBPRA2797"/>
<dbReference type="KEGG" id="ppr:PBPRA2797"/>
<dbReference type="eggNOG" id="COG3092">
    <property type="taxonomic scope" value="Bacteria"/>
</dbReference>
<dbReference type="HOGENOM" id="CLU_128746_0_0_6"/>
<dbReference type="Proteomes" id="UP000000593">
    <property type="component" value="Chromosome 1"/>
</dbReference>
<dbReference type="GO" id="GO:0005886">
    <property type="term" value="C:plasma membrane"/>
    <property type="evidence" value="ECO:0007669"/>
    <property type="project" value="UniProtKB-SubCell"/>
</dbReference>
<dbReference type="HAMAP" id="MF_01101">
    <property type="entry name" value="UPF0208"/>
    <property type="match status" value="1"/>
</dbReference>
<dbReference type="InterPro" id="IPR007334">
    <property type="entry name" value="UPF0208"/>
</dbReference>
<dbReference type="NCBIfam" id="NF002493">
    <property type="entry name" value="PRK01816.1"/>
    <property type="match status" value="1"/>
</dbReference>
<dbReference type="Pfam" id="PF04217">
    <property type="entry name" value="DUF412"/>
    <property type="match status" value="1"/>
</dbReference>
<accession>Q6LNF7</accession>
<organism>
    <name type="scientific">Photobacterium profundum (strain SS9)</name>
    <dbReference type="NCBI Taxonomy" id="298386"/>
    <lineage>
        <taxon>Bacteria</taxon>
        <taxon>Pseudomonadati</taxon>
        <taxon>Pseudomonadota</taxon>
        <taxon>Gammaproteobacteria</taxon>
        <taxon>Vibrionales</taxon>
        <taxon>Vibrionaceae</taxon>
        <taxon>Photobacterium</taxon>
    </lineage>
</organism>
<keyword id="KW-0997">Cell inner membrane</keyword>
<keyword id="KW-1003">Cell membrane</keyword>
<keyword id="KW-0472">Membrane</keyword>
<keyword id="KW-1185">Reference proteome</keyword>
<keyword id="KW-0812">Transmembrane</keyword>
<keyword id="KW-1133">Transmembrane helix</keyword>
<name>Y2797_PHOPR</name>
<proteinExistence type="inferred from homology"/>
<feature type="chain" id="PRO_0000080817" description="UPF0208 membrane protein PBPRA2797">
    <location>
        <begin position="1"/>
        <end position="149"/>
    </location>
</feature>
<feature type="transmembrane region" description="Helical" evidence="1">
    <location>
        <begin position="41"/>
        <end position="60"/>
    </location>
</feature>
<feature type="transmembrane region" description="Helical" evidence="1">
    <location>
        <begin position="65"/>
        <end position="87"/>
    </location>
</feature>